<reference key="1">
    <citation type="submission" date="2006-08" db="EMBL/GenBank/DDBJ databases">
        <authorList>
            <consortium name="NIH - Zebrafish Gene Collection (ZGC) project"/>
        </authorList>
    </citation>
    <scope>NUCLEOTIDE SEQUENCE [LARGE SCALE MRNA]</scope>
    <source>
        <tissue>Ovary</tissue>
    </source>
</reference>
<accession>Q0P464</accession>
<feature type="chain" id="PRO_0000295874" description="Methenyltetrahydrofolate synthase domain-containing protein">
    <location>
        <begin position="1"/>
        <end position="382"/>
    </location>
</feature>
<feature type="domain" description="RRM">
    <location>
        <begin position="306"/>
        <end position="382"/>
    </location>
</feature>
<proteinExistence type="evidence at transcript level"/>
<dbReference type="EMBL" id="BC122258">
    <property type="protein sequence ID" value="AAI22259.1"/>
    <property type="molecule type" value="mRNA"/>
</dbReference>
<dbReference type="RefSeq" id="NP_001038564.1">
    <property type="nucleotide sequence ID" value="NM_001045099.1"/>
</dbReference>
<dbReference type="SMR" id="Q0P464"/>
<dbReference type="FunCoup" id="Q0P464">
    <property type="interactions" value="239"/>
</dbReference>
<dbReference type="STRING" id="7955.ENSDARP00000090099"/>
<dbReference type="PaxDb" id="7955-ENSDARP00000090099"/>
<dbReference type="Ensembl" id="ENSDART00000099326">
    <property type="protein sequence ID" value="ENSDARP00000090099"/>
    <property type="gene ID" value="ENSDARG00000062042"/>
</dbReference>
<dbReference type="GeneID" id="566203"/>
<dbReference type="KEGG" id="dre:566203"/>
<dbReference type="AGR" id="ZFIN:ZDB-GENE-030131-3513"/>
<dbReference type="CTD" id="64779"/>
<dbReference type="ZFIN" id="ZDB-GENE-030131-3513">
    <property type="gene designation" value="mthfsd"/>
</dbReference>
<dbReference type="eggNOG" id="KOG4410">
    <property type="taxonomic scope" value="Eukaryota"/>
</dbReference>
<dbReference type="HOGENOM" id="CLU_031500_3_0_1"/>
<dbReference type="InParanoid" id="Q0P464"/>
<dbReference type="OMA" id="VIRTECK"/>
<dbReference type="OrthoDB" id="433414at2759"/>
<dbReference type="PhylomeDB" id="Q0P464"/>
<dbReference type="TreeFam" id="TF324742"/>
<dbReference type="PRO" id="PR:Q0P464"/>
<dbReference type="Proteomes" id="UP000000437">
    <property type="component" value="Chromosome 18"/>
</dbReference>
<dbReference type="Bgee" id="ENSDARG00000062042">
    <property type="expression patterns" value="Expressed in liver and 15 other cell types or tissues"/>
</dbReference>
<dbReference type="ExpressionAtlas" id="Q0P464">
    <property type="expression patterns" value="baseline and differential"/>
</dbReference>
<dbReference type="GO" id="GO:0005737">
    <property type="term" value="C:cytoplasm"/>
    <property type="evidence" value="ECO:0000318"/>
    <property type="project" value="GO_Central"/>
</dbReference>
<dbReference type="GO" id="GO:0003723">
    <property type="term" value="F:RNA binding"/>
    <property type="evidence" value="ECO:0007669"/>
    <property type="project" value="UniProtKB-KW"/>
</dbReference>
<dbReference type="CDD" id="cd12270">
    <property type="entry name" value="RRM_MTHFSD"/>
    <property type="match status" value="1"/>
</dbReference>
<dbReference type="FunFam" id="3.40.50.10420:FF:000001">
    <property type="entry name" value="Methenyltetrahydrofolate synthase domain-containing protein"/>
    <property type="match status" value="1"/>
</dbReference>
<dbReference type="Gene3D" id="3.30.70.330">
    <property type="match status" value="1"/>
</dbReference>
<dbReference type="Gene3D" id="3.40.50.10420">
    <property type="entry name" value="NagB/RpiA/CoA transferase-like"/>
    <property type="match status" value="1"/>
</dbReference>
<dbReference type="InterPro" id="IPR002698">
    <property type="entry name" value="FTHF_cligase"/>
</dbReference>
<dbReference type="InterPro" id="IPR024185">
    <property type="entry name" value="FTHF_cligase-like_sf"/>
</dbReference>
<dbReference type="InterPro" id="IPR034359">
    <property type="entry name" value="MTHFSD_RRM"/>
</dbReference>
<dbReference type="InterPro" id="IPR037171">
    <property type="entry name" value="NagB/RpiA_transferase-like"/>
</dbReference>
<dbReference type="InterPro" id="IPR012677">
    <property type="entry name" value="Nucleotide-bd_a/b_plait_sf"/>
</dbReference>
<dbReference type="InterPro" id="IPR035979">
    <property type="entry name" value="RBD_domain_sf"/>
</dbReference>
<dbReference type="PANTHER" id="PTHR13017">
    <property type="entry name" value="5-FORMYLTETRAHYDROFOLATE CYCLO-LIGASE-RELATED"/>
    <property type="match status" value="1"/>
</dbReference>
<dbReference type="PANTHER" id="PTHR13017:SF0">
    <property type="entry name" value="METHENYLTETRAHYDROFOLATE SYNTHASE DOMAIN-CONTAINING PROTEIN"/>
    <property type="match status" value="1"/>
</dbReference>
<dbReference type="Pfam" id="PF01812">
    <property type="entry name" value="5-FTHF_cyc-lig"/>
    <property type="match status" value="1"/>
</dbReference>
<dbReference type="SUPFAM" id="SSF100950">
    <property type="entry name" value="NagB/RpiA/CoA transferase-like"/>
    <property type="match status" value="1"/>
</dbReference>
<dbReference type="SUPFAM" id="SSF54928">
    <property type="entry name" value="RNA-binding domain, RBD"/>
    <property type="match status" value="1"/>
</dbReference>
<gene>
    <name type="primary">mthfsd</name>
    <name type="ORF">zgc:153374</name>
</gene>
<keyword id="KW-1185">Reference proteome</keyword>
<keyword id="KW-0694">RNA-binding</keyword>
<name>MTHSD_DANRE</name>
<organism>
    <name type="scientific">Danio rerio</name>
    <name type="common">Zebrafish</name>
    <name type="synonym">Brachydanio rerio</name>
    <dbReference type="NCBI Taxonomy" id="7955"/>
    <lineage>
        <taxon>Eukaryota</taxon>
        <taxon>Metazoa</taxon>
        <taxon>Chordata</taxon>
        <taxon>Craniata</taxon>
        <taxon>Vertebrata</taxon>
        <taxon>Euteleostomi</taxon>
        <taxon>Actinopterygii</taxon>
        <taxon>Neopterygii</taxon>
        <taxon>Teleostei</taxon>
        <taxon>Ostariophysi</taxon>
        <taxon>Cypriniformes</taxon>
        <taxon>Danionidae</taxon>
        <taxon>Danioninae</taxon>
        <taxon>Danio</taxon>
    </lineage>
</organism>
<sequence length="382" mass="43084">MEPVIKINQGETKWDVRHKVWNYIEVKNLANFPRPVHNRIPNFKGALEACNKVAQLEIFIESAVVKVDPDKPMEGVRLAALKARKSLLVPTPRLRFGLFNRITPPKGATKETLRVCSTSQGIKEFSVPVGLDDKVQVDLVVVGSVAVSEKGYRIGKGEGFADMEYAMMACMGSVTESTWVITVVHDCQVMDIPEELIERHDLMVDFIITATRVIKTECKHPKPQGIIWSMLHKEELKKIPILKKLRTLEQEAGKDVALKLIHAGEDEYRKSKELQWQSHPKADLEFKCLASNSDRCSGFEPKFPTTTVYLSDIPPALRVSELKGLLREQEVVPLQIRWQGAKRKAFLLYADFTGAERATAILQKLFINGHTIQAKCVSSQKM</sequence>
<protein>
    <recommendedName>
        <fullName>Methenyltetrahydrofolate synthase domain-containing protein</fullName>
    </recommendedName>
</protein>